<sequence length="247" mass="26842">MAGHSKWANIKFRKGVQDAKRGKIFTKLIREITVAARMGGGDESSNPRLRDAVKKALNANMKRDTIDNAVKRGVGGADGEAMIAMRYEGYGPGGVAILVDCLSDNKNRTVSEVRHAFSKHGGNLGTDGSVSYLFTNQGEILMASNQPEDKVMEIAIDAGASDVAVEDSQIEIITPVEAYHTVLNALQDAALEVEQSHLTMRAQTLVPISDETAESLIKLIDMLEDLDDVQEVYSNAEFSEKILESMN</sequence>
<reference key="1">
    <citation type="journal article" date="2004" name="Nat. Genet.">
        <title>Evidence in the Legionella pneumophila genome for exploitation of host cell functions and high genome plasticity.</title>
        <authorList>
            <person name="Cazalet C."/>
            <person name="Rusniok C."/>
            <person name="Brueggemann H."/>
            <person name="Zidane N."/>
            <person name="Magnier A."/>
            <person name="Ma L."/>
            <person name="Tichit M."/>
            <person name="Jarraud S."/>
            <person name="Bouchier C."/>
            <person name="Vandenesch F."/>
            <person name="Kunst F."/>
            <person name="Etienne J."/>
            <person name="Glaser P."/>
            <person name="Buchrieser C."/>
        </authorList>
    </citation>
    <scope>NUCLEOTIDE SEQUENCE [LARGE SCALE GENOMIC DNA]</scope>
    <source>
        <strain>Lens</strain>
    </source>
</reference>
<accession>Q5WX49</accession>
<comment type="subcellular location">
    <subcellularLocation>
        <location evidence="1">Cytoplasm</location>
    </subcellularLocation>
</comment>
<comment type="similarity">
    <text evidence="1">Belongs to the TACO1 family.</text>
</comment>
<dbReference type="EMBL" id="CR628337">
    <property type="protein sequence ID" value="CAH15488.1"/>
    <property type="molecule type" value="Genomic_DNA"/>
</dbReference>
<dbReference type="RefSeq" id="WP_011215333.1">
    <property type="nucleotide sequence ID" value="NC_006369.1"/>
</dbReference>
<dbReference type="SMR" id="Q5WX49"/>
<dbReference type="KEGG" id="lpf:lpl1249"/>
<dbReference type="LegioList" id="lpl1249"/>
<dbReference type="HOGENOM" id="CLU_062974_2_2_6"/>
<dbReference type="Proteomes" id="UP000002517">
    <property type="component" value="Chromosome"/>
</dbReference>
<dbReference type="GO" id="GO:0005829">
    <property type="term" value="C:cytosol"/>
    <property type="evidence" value="ECO:0007669"/>
    <property type="project" value="TreeGrafter"/>
</dbReference>
<dbReference type="GO" id="GO:0003677">
    <property type="term" value="F:DNA binding"/>
    <property type="evidence" value="ECO:0007669"/>
    <property type="project" value="UniProtKB-UniRule"/>
</dbReference>
<dbReference type="GO" id="GO:0006355">
    <property type="term" value="P:regulation of DNA-templated transcription"/>
    <property type="evidence" value="ECO:0007669"/>
    <property type="project" value="UniProtKB-UniRule"/>
</dbReference>
<dbReference type="FunFam" id="1.10.10.200:FF:000002">
    <property type="entry name" value="Probable transcriptional regulatory protein CLM62_37755"/>
    <property type="match status" value="1"/>
</dbReference>
<dbReference type="Gene3D" id="1.10.10.200">
    <property type="match status" value="1"/>
</dbReference>
<dbReference type="Gene3D" id="3.30.70.980">
    <property type="match status" value="2"/>
</dbReference>
<dbReference type="HAMAP" id="MF_00693">
    <property type="entry name" value="Transcrip_reg_TACO1"/>
    <property type="match status" value="1"/>
</dbReference>
<dbReference type="InterPro" id="IPR017856">
    <property type="entry name" value="Integrase-like_N"/>
</dbReference>
<dbReference type="InterPro" id="IPR048300">
    <property type="entry name" value="TACO1_YebC-like_2nd/3rd_dom"/>
</dbReference>
<dbReference type="InterPro" id="IPR049083">
    <property type="entry name" value="TACO1_YebC_N"/>
</dbReference>
<dbReference type="InterPro" id="IPR002876">
    <property type="entry name" value="Transcrip_reg_TACO1-like"/>
</dbReference>
<dbReference type="InterPro" id="IPR026564">
    <property type="entry name" value="Transcrip_reg_TACO1-like_dom3"/>
</dbReference>
<dbReference type="InterPro" id="IPR029072">
    <property type="entry name" value="YebC-like"/>
</dbReference>
<dbReference type="NCBIfam" id="NF001030">
    <property type="entry name" value="PRK00110.1"/>
    <property type="match status" value="1"/>
</dbReference>
<dbReference type="NCBIfam" id="NF009044">
    <property type="entry name" value="PRK12378.1"/>
    <property type="match status" value="1"/>
</dbReference>
<dbReference type="NCBIfam" id="TIGR01033">
    <property type="entry name" value="YebC/PmpR family DNA-binding transcriptional regulator"/>
    <property type="match status" value="1"/>
</dbReference>
<dbReference type="PANTHER" id="PTHR12532:SF6">
    <property type="entry name" value="TRANSCRIPTIONAL REGULATORY PROTEIN YEBC-RELATED"/>
    <property type="match status" value="1"/>
</dbReference>
<dbReference type="PANTHER" id="PTHR12532">
    <property type="entry name" value="TRANSLATIONAL ACTIVATOR OF CYTOCHROME C OXIDASE 1"/>
    <property type="match status" value="1"/>
</dbReference>
<dbReference type="Pfam" id="PF20772">
    <property type="entry name" value="TACO1_YebC_N"/>
    <property type="match status" value="1"/>
</dbReference>
<dbReference type="Pfam" id="PF01709">
    <property type="entry name" value="Transcrip_reg"/>
    <property type="match status" value="1"/>
</dbReference>
<dbReference type="SUPFAM" id="SSF75625">
    <property type="entry name" value="YebC-like"/>
    <property type="match status" value="1"/>
</dbReference>
<feature type="chain" id="PRO_0000175830" description="Probable transcriptional regulatory protein lpl1249">
    <location>
        <begin position="1"/>
        <end position="247"/>
    </location>
</feature>
<gene>
    <name type="ordered locus">lpl1249</name>
</gene>
<keyword id="KW-0963">Cytoplasm</keyword>
<keyword id="KW-0238">DNA-binding</keyword>
<keyword id="KW-0804">Transcription</keyword>
<keyword id="KW-0805">Transcription regulation</keyword>
<organism>
    <name type="scientific">Legionella pneumophila (strain Lens)</name>
    <dbReference type="NCBI Taxonomy" id="297245"/>
    <lineage>
        <taxon>Bacteria</taxon>
        <taxon>Pseudomonadati</taxon>
        <taxon>Pseudomonadota</taxon>
        <taxon>Gammaproteobacteria</taxon>
        <taxon>Legionellales</taxon>
        <taxon>Legionellaceae</taxon>
        <taxon>Legionella</taxon>
    </lineage>
</organism>
<name>Y1249_LEGPL</name>
<evidence type="ECO:0000255" key="1">
    <source>
        <dbReference type="HAMAP-Rule" id="MF_00693"/>
    </source>
</evidence>
<proteinExistence type="inferred from homology"/>
<protein>
    <recommendedName>
        <fullName evidence="1">Probable transcriptional regulatory protein lpl1249</fullName>
    </recommendedName>
</protein>